<name>RRF_ANADF</name>
<accession>A7H725</accession>
<comment type="function">
    <text evidence="1">Responsible for the release of ribosomes from messenger RNA at the termination of protein biosynthesis. May increase the efficiency of translation by recycling ribosomes from one round of translation to another.</text>
</comment>
<comment type="subcellular location">
    <subcellularLocation>
        <location evidence="1">Cytoplasm</location>
    </subcellularLocation>
</comment>
<comment type="similarity">
    <text evidence="1">Belongs to the RRF family.</text>
</comment>
<keyword id="KW-0963">Cytoplasm</keyword>
<keyword id="KW-0648">Protein biosynthesis</keyword>
<keyword id="KW-1185">Reference proteome</keyword>
<evidence type="ECO:0000255" key="1">
    <source>
        <dbReference type="HAMAP-Rule" id="MF_00040"/>
    </source>
</evidence>
<proteinExistence type="inferred from homology"/>
<feature type="chain" id="PRO_0000341000" description="Ribosome-recycling factor">
    <location>
        <begin position="1"/>
        <end position="187"/>
    </location>
</feature>
<organism>
    <name type="scientific">Anaeromyxobacter sp. (strain Fw109-5)</name>
    <dbReference type="NCBI Taxonomy" id="404589"/>
    <lineage>
        <taxon>Bacteria</taxon>
        <taxon>Pseudomonadati</taxon>
        <taxon>Myxococcota</taxon>
        <taxon>Myxococcia</taxon>
        <taxon>Myxococcales</taxon>
        <taxon>Cystobacterineae</taxon>
        <taxon>Anaeromyxobacteraceae</taxon>
        <taxon>Anaeromyxobacter</taxon>
    </lineage>
</organism>
<reference key="1">
    <citation type="journal article" date="2015" name="Genome Announc.">
        <title>Complete genome sequence of Anaeromyxobacter sp. Fw109-5, an anaerobic, metal-reducing bacterium isolated from a contaminated subsurface environment.</title>
        <authorList>
            <person name="Hwang C."/>
            <person name="Copeland A."/>
            <person name="Lucas S."/>
            <person name="Lapidus A."/>
            <person name="Barry K."/>
            <person name="Glavina Del Rio T."/>
            <person name="Dalin E."/>
            <person name="Tice H."/>
            <person name="Pitluck S."/>
            <person name="Sims D."/>
            <person name="Brettin T."/>
            <person name="Bruce D.C."/>
            <person name="Detter J.C."/>
            <person name="Han C.S."/>
            <person name="Schmutz J."/>
            <person name="Larimer F.W."/>
            <person name="Land M.L."/>
            <person name="Hauser L.J."/>
            <person name="Kyrpides N."/>
            <person name="Lykidis A."/>
            <person name="Richardson P."/>
            <person name="Belieav A."/>
            <person name="Sanford R.A."/>
            <person name="Loeffler F.E."/>
            <person name="Fields M.W."/>
        </authorList>
    </citation>
    <scope>NUCLEOTIDE SEQUENCE [LARGE SCALE GENOMIC DNA]</scope>
    <source>
        <strain>Fw109-5</strain>
    </source>
</reference>
<gene>
    <name evidence="1" type="primary">frr</name>
    <name type="ordered locus">Anae109_0305</name>
</gene>
<dbReference type="EMBL" id="CP000769">
    <property type="protein sequence ID" value="ABS24521.1"/>
    <property type="molecule type" value="Genomic_DNA"/>
</dbReference>
<dbReference type="RefSeq" id="WP_011984627.1">
    <property type="nucleotide sequence ID" value="NC_009675.1"/>
</dbReference>
<dbReference type="SMR" id="A7H725"/>
<dbReference type="STRING" id="404589.Anae109_0305"/>
<dbReference type="KEGG" id="afw:Anae109_0305"/>
<dbReference type="eggNOG" id="COG0233">
    <property type="taxonomic scope" value="Bacteria"/>
</dbReference>
<dbReference type="HOGENOM" id="CLU_073981_2_0_7"/>
<dbReference type="OrthoDB" id="9804006at2"/>
<dbReference type="Proteomes" id="UP000006382">
    <property type="component" value="Chromosome"/>
</dbReference>
<dbReference type="GO" id="GO:0005829">
    <property type="term" value="C:cytosol"/>
    <property type="evidence" value="ECO:0007669"/>
    <property type="project" value="GOC"/>
</dbReference>
<dbReference type="GO" id="GO:0043023">
    <property type="term" value="F:ribosomal large subunit binding"/>
    <property type="evidence" value="ECO:0007669"/>
    <property type="project" value="TreeGrafter"/>
</dbReference>
<dbReference type="GO" id="GO:0002184">
    <property type="term" value="P:cytoplasmic translational termination"/>
    <property type="evidence" value="ECO:0007669"/>
    <property type="project" value="TreeGrafter"/>
</dbReference>
<dbReference type="CDD" id="cd00520">
    <property type="entry name" value="RRF"/>
    <property type="match status" value="1"/>
</dbReference>
<dbReference type="FunFam" id="1.10.132.20:FF:000001">
    <property type="entry name" value="Ribosome-recycling factor"/>
    <property type="match status" value="1"/>
</dbReference>
<dbReference type="FunFam" id="3.30.1360.40:FF:000001">
    <property type="entry name" value="Ribosome-recycling factor"/>
    <property type="match status" value="1"/>
</dbReference>
<dbReference type="Gene3D" id="3.30.1360.40">
    <property type="match status" value="1"/>
</dbReference>
<dbReference type="Gene3D" id="1.10.132.20">
    <property type="entry name" value="Ribosome-recycling factor"/>
    <property type="match status" value="1"/>
</dbReference>
<dbReference type="HAMAP" id="MF_00040">
    <property type="entry name" value="RRF"/>
    <property type="match status" value="1"/>
</dbReference>
<dbReference type="InterPro" id="IPR002661">
    <property type="entry name" value="Ribosome_recyc_fac"/>
</dbReference>
<dbReference type="InterPro" id="IPR023584">
    <property type="entry name" value="Ribosome_recyc_fac_dom"/>
</dbReference>
<dbReference type="InterPro" id="IPR036191">
    <property type="entry name" value="RRF_sf"/>
</dbReference>
<dbReference type="NCBIfam" id="TIGR00496">
    <property type="entry name" value="frr"/>
    <property type="match status" value="1"/>
</dbReference>
<dbReference type="PANTHER" id="PTHR20982:SF3">
    <property type="entry name" value="MITOCHONDRIAL RIBOSOME RECYCLING FACTOR PSEUDO 1"/>
    <property type="match status" value="1"/>
</dbReference>
<dbReference type="PANTHER" id="PTHR20982">
    <property type="entry name" value="RIBOSOME RECYCLING FACTOR"/>
    <property type="match status" value="1"/>
</dbReference>
<dbReference type="Pfam" id="PF01765">
    <property type="entry name" value="RRF"/>
    <property type="match status" value="1"/>
</dbReference>
<dbReference type="SUPFAM" id="SSF55194">
    <property type="entry name" value="Ribosome recycling factor, RRF"/>
    <property type="match status" value="1"/>
</dbReference>
<protein>
    <recommendedName>
        <fullName evidence="1">Ribosome-recycling factor</fullName>
        <shortName evidence="1">RRF</shortName>
    </recommendedName>
    <alternativeName>
        <fullName evidence="1">Ribosome-releasing factor</fullName>
    </alternativeName>
</protein>
<sequence length="187" mass="20883">MSVADDILNDLHGGIANTLDDLRRELASVRTGRASLHLLDGVRVDYYGTSTPLNQVATLSVPEARLIMVKPWEKNLIPVIEKAIRDANLGVNPQSDKDLVRVPIPPLTEERRKEIVKQVKHKGEDHKVAIRNQRRDAKELIEVAEKDGDIAADDAKKALDKMQKETDEGVKKVDEIVAAKEKEVMQV</sequence>